<comment type="subcellular location">
    <subcellularLocation>
        <location evidence="1">Secreted</location>
    </subcellularLocation>
</comment>
<comment type="similarity">
    <text evidence="3">Belongs to the DEFL family.</text>
</comment>
<proteinExistence type="inferred from homology"/>
<name>DEF81_ARATH</name>
<organism>
    <name type="scientific">Arabidopsis thaliana</name>
    <name type="common">Mouse-ear cress</name>
    <dbReference type="NCBI Taxonomy" id="3702"/>
    <lineage>
        <taxon>Eukaryota</taxon>
        <taxon>Viridiplantae</taxon>
        <taxon>Streptophyta</taxon>
        <taxon>Embryophyta</taxon>
        <taxon>Tracheophyta</taxon>
        <taxon>Spermatophyta</taxon>
        <taxon>Magnoliopsida</taxon>
        <taxon>eudicotyledons</taxon>
        <taxon>Gunneridae</taxon>
        <taxon>Pentapetalae</taxon>
        <taxon>rosids</taxon>
        <taxon>malvids</taxon>
        <taxon>Brassicales</taxon>
        <taxon>Brassicaceae</taxon>
        <taxon>Camelineae</taxon>
        <taxon>Arabidopsis</taxon>
    </lineage>
</organism>
<keyword id="KW-0929">Antimicrobial</keyword>
<keyword id="KW-1015">Disulfide bond</keyword>
<keyword id="KW-0295">Fungicide</keyword>
<keyword id="KW-0611">Plant defense</keyword>
<keyword id="KW-1185">Reference proteome</keyword>
<keyword id="KW-0964">Secreted</keyword>
<keyword id="KW-0732">Signal</keyword>
<feature type="signal peptide" evidence="2">
    <location>
        <begin position="1"/>
        <end position="27"/>
    </location>
</feature>
<feature type="chain" id="PRO_0000379651" description="Defensin-like protein 81">
    <location>
        <begin position="28"/>
        <end position="87"/>
    </location>
</feature>
<feature type="disulfide bond" evidence="1">
    <location>
        <begin position="33"/>
        <end position="69"/>
    </location>
</feature>
<feature type="disulfide bond" evidence="1">
    <location>
        <begin position="37"/>
        <end position="57"/>
    </location>
</feature>
<feature type="disulfide bond" evidence="1">
    <location>
        <begin position="43"/>
        <end position="67"/>
    </location>
</feature>
<feature type="disulfide bond" evidence="1">
    <location>
        <begin position="47"/>
        <end position="68"/>
    </location>
</feature>
<protein>
    <recommendedName>
        <fullName>Defensin-like protein 81</fullName>
    </recommendedName>
</protein>
<reference key="1">
    <citation type="journal article" date="2000" name="Nature">
        <title>Sequence and analysis of chromosome 1 of the plant Arabidopsis thaliana.</title>
        <authorList>
            <person name="Theologis A."/>
            <person name="Ecker J.R."/>
            <person name="Palm C.J."/>
            <person name="Federspiel N.A."/>
            <person name="Kaul S."/>
            <person name="White O."/>
            <person name="Alonso J."/>
            <person name="Altafi H."/>
            <person name="Araujo R."/>
            <person name="Bowman C.L."/>
            <person name="Brooks S.Y."/>
            <person name="Buehler E."/>
            <person name="Chan A."/>
            <person name="Chao Q."/>
            <person name="Chen H."/>
            <person name="Cheuk R.F."/>
            <person name="Chin C.W."/>
            <person name="Chung M.K."/>
            <person name="Conn L."/>
            <person name="Conway A.B."/>
            <person name="Conway A.R."/>
            <person name="Creasy T.H."/>
            <person name="Dewar K."/>
            <person name="Dunn P."/>
            <person name="Etgu P."/>
            <person name="Feldblyum T.V."/>
            <person name="Feng J.-D."/>
            <person name="Fong B."/>
            <person name="Fujii C.Y."/>
            <person name="Gill J.E."/>
            <person name="Goldsmith A.D."/>
            <person name="Haas B."/>
            <person name="Hansen N.F."/>
            <person name="Hughes B."/>
            <person name="Huizar L."/>
            <person name="Hunter J.L."/>
            <person name="Jenkins J."/>
            <person name="Johnson-Hopson C."/>
            <person name="Khan S."/>
            <person name="Khaykin E."/>
            <person name="Kim C.J."/>
            <person name="Koo H.L."/>
            <person name="Kremenetskaia I."/>
            <person name="Kurtz D.B."/>
            <person name="Kwan A."/>
            <person name="Lam B."/>
            <person name="Langin-Hooper S."/>
            <person name="Lee A."/>
            <person name="Lee J.M."/>
            <person name="Lenz C.A."/>
            <person name="Li J.H."/>
            <person name="Li Y.-P."/>
            <person name="Lin X."/>
            <person name="Liu S.X."/>
            <person name="Liu Z.A."/>
            <person name="Luros J.S."/>
            <person name="Maiti R."/>
            <person name="Marziali A."/>
            <person name="Militscher J."/>
            <person name="Miranda M."/>
            <person name="Nguyen M."/>
            <person name="Nierman W.C."/>
            <person name="Osborne B.I."/>
            <person name="Pai G."/>
            <person name="Peterson J."/>
            <person name="Pham P.K."/>
            <person name="Rizzo M."/>
            <person name="Rooney T."/>
            <person name="Rowley D."/>
            <person name="Sakano H."/>
            <person name="Salzberg S.L."/>
            <person name="Schwartz J.R."/>
            <person name="Shinn P."/>
            <person name="Southwick A.M."/>
            <person name="Sun H."/>
            <person name="Tallon L.J."/>
            <person name="Tambunga G."/>
            <person name="Toriumi M.J."/>
            <person name="Town C.D."/>
            <person name="Utterback T."/>
            <person name="Van Aken S."/>
            <person name="Vaysberg M."/>
            <person name="Vysotskaia V.S."/>
            <person name="Walker M."/>
            <person name="Wu D."/>
            <person name="Yu G."/>
            <person name="Fraser C.M."/>
            <person name="Venter J.C."/>
            <person name="Davis R.W."/>
        </authorList>
    </citation>
    <scope>NUCLEOTIDE SEQUENCE [LARGE SCALE GENOMIC DNA]</scope>
    <source>
        <strain>cv. Columbia</strain>
    </source>
</reference>
<reference key="2">
    <citation type="journal article" date="2017" name="Plant J.">
        <title>Araport11: a complete reannotation of the Arabidopsis thaliana reference genome.</title>
        <authorList>
            <person name="Cheng C.Y."/>
            <person name="Krishnakumar V."/>
            <person name="Chan A.P."/>
            <person name="Thibaud-Nissen F."/>
            <person name="Schobel S."/>
            <person name="Town C.D."/>
        </authorList>
    </citation>
    <scope>GENOME REANNOTATION</scope>
    <source>
        <strain>cv. Columbia</strain>
    </source>
</reference>
<reference key="3">
    <citation type="journal article" date="2006" name="Plant Biotechnol. J.">
        <title>Simultaneous high-throughput recombinational cloning of open reading frames in closed and open configurations.</title>
        <authorList>
            <person name="Underwood B.A."/>
            <person name="Vanderhaeghen R."/>
            <person name="Whitford R."/>
            <person name="Town C.D."/>
            <person name="Hilson P."/>
        </authorList>
    </citation>
    <scope>NUCLEOTIDE SEQUENCE [LARGE SCALE MRNA]</scope>
    <source>
        <strain>cv. Columbia</strain>
    </source>
</reference>
<reference key="4">
    <citation type="journal article" date="2007" name="Plant J.">
        <title>Small cysteine-rich peptides resembling antimicrobial peptides have been under-predicted in plants.</title>
        <authorList>
            <person name="Silverstein K.A.T."/>
            <person name="Moskal W.A. Jr."/>
            <person name="Wu H.C."/>
            <person name="Underwood B.A."/>
            <person name="Graham M.A."/>
            <person name="Town C.D."/>
            <person name="VandenBosch K.A."/>
        </authorList>
    </citation>
    <scope>NUCLEOTIDE SEQUENCE [LARGE SCALE MRNA]</scope>
    <source>
        <strain>cv. Columbia</strain>
    </source>
</reference>
<reference key="5">
    <citation type="journal article" date="2005" name="Plant Physiol.">
        <title>Genome organization of more than 300 defensin-like genes in Arabidopsis.</title>
        <authorList>
            <person name="Silverstein K.A.T."/>
            <person name="Graham M.A."/>
            <person name="Paape T.D."/>
            <person name="VandenBosch K.A."/>
        </authorList>
    </citation>
    <scope>GENE FAMILY</scope>
</reference>
<sequence>MTIKKFLPLLLSSLMVYSLILLPIISGKSPVSCDGACTSTPQCNKICTSKGYKKGICHGSAHLFYICCCYAKFESQYDPSISSPPNY</sequence>
<gene>
    <name type="ordered locus">At1g56233</name>
    <name type="ORF">F14G9</name>
</gene>
<evidence type="ECO:0000250" key="1"/>
<evidence type="ECO:0000255" key="2"/>
<evidence type="ECO:0000305" key="3"/>
<dbReference type="EMBL" id="AC069159">
    <property type="status" value="NOT_ANNOTATED_CDS"/>
    <property type="molecule type" value="Genomic_DNA"/>
</dbReference>
<dbReference type="EMBL" id="CP002684">
    <property type="protein sequence ID" value="AEE33367.1"/>
    <property type="molecule type" value="Genomic_DNA"/>
</dbReference>
<dbReference type="EMBL" id="DQ912207">
    <property type="protein sequence ID" value="ABI34015.1"/>
    <property type="molecule type" value="mRNA"/>
</dbReference>
<dbReference type="EMBL" id="EF182795">
    <property type="status" value="NOT_ANNOTATED_CDS"/>
    <property type="molecule type" value="mRNA"/>
</dbReference>
<dbReference type="RefSeq" id="NP_001031198.1">
    <property type="nucleotide sequence ID" value="NM_001036121.2"/>
</dbReference>
<dbReference type="STRING" id="3702.Q2V4G6"/>
<dbReference type="PaxDb" id="3702-AT1G56233.1"/>
<dbReference type="EnsemblPlants" id="AT1G56233.1">
    <property type="protein sequence ID" value="AT1G56233.1"/>
    <property type="gene ID" value="AT1G56233"/>
</dbReference>
<dbReference type="GeneID" id="3767465"/>
<dbReference type="Gramene" id="AT1G56233.1">
    <property type="protein sequence ID" value="AT1G56233.1"/>
    <property type="gene ID" value="AT1G56233"/>
</dbReference>
<dbReference type="KEGG" id="ath:AT1G56233"/>
<dbReference type="Araport" id="AT1G56233"/>
<dbReference type="TAIR" id="AT1G56233"/>
<dbReference type="HOGENOM" id="CLU_180308_0_0_1"/>
<dbReference type="InParanoid" id="Q2V4G6"/>
<dbReference type="OrthoDB" id="1022784at2759"/>
<dbReference type="PhylomeDB" id="Q2V4G6"/>
<dbReference type="PRO" id="PR:Q2V4G6"/>
<dbReference type="Proteomes" id="UP000006548">
    <property type="component" value="Chromosome 1"/>
</dbReference>
<dbReference type="ExpressionAtlas" id="Q2V4G6">
    <property type="expression patterns" value="baseline and differential"/>
</dbReference>
<dbReference type="GO" id="GO:0005576">
    <property type="term" value="C:extracellular region"/>
    <property type="evidence" value="ECO:0007669"/>
    <property type="project" value="UniProtKB-SubCell"/>
</dbReference>
<dbReference type="GO" id="GO:0050832">
    <property type="term" value="P:defense response to fungus"/>
    <property type="evidence" value="ECO:0007669"/>
    <property type="project" value="UniProtKB-KW"/>
</dbReference>
<dbReference type="GO" id="GO:0031640">
    <property type="term" value="P:killing of cells of another organism"/>
    <property type="evidence" value="ECO:0007669"/>
    <property type="project" value="UniProtKB-KW"/>
</dbReference>
<accession>Q2V4G6</accession>